<organism>
    <name type="scientific">Aliarcobacter butzleri (strain RM4018)</name>
    <name type="common">Arcobacter butzleri</name>
    <dbReference type="NCBI Taxonomy" id="367737"/>
    <lineage>
        <taxon>Bacteria</taxon>
        <taxon>Pseudomonadati</taxon>
        <taxon>Campylobacterota</taxon>
        <taxon>Epsilonproteobacteria</taxon>
        <taxon>Campylobacterales</taxon>
        <taxon>Arcobacteraceae</taxon>
        <taxon>Aliarcobacter</taxon>
    </lineage>
</organism>
<accession>A8ES24</accession>
<comment type="catalytic activity">
    <reaction evidence="1">
        <text>1-(5-phospho-beta-D-ribosyl)-5-[(5-phospho-beta-D-ribosylamino)methylideneamino]imidazole-4-carboxamide = 5-[(5-phospho-1-deoxy-D-ribulos-1-ylimino)methylamino]-1-(5-phospho-beta-D-ribosyl)imidazole-4-carboxamide</text>
        <dbReference type="Rhea" id="RHEA:15469"/>
        <dbReference type="ChEBI" id="CHEBI:58435"/>
        <dbReference type="ChEBI" id="CHEBI:58525"/>
        <dbReference type="EC" id="5.3.1.16"/>
    </reaction>
</comment>
<comment type="pathway">
    <text evidence="1">Amino-acid biosynthesis; L-histidine biosynthesis; L-histidine from 5-phospho-alpha-D-ribose 1-diphosphate: step 4/9.</text>
</comment>
<comment type="subcellular location">
    <subcellularLocation>
        <location evidence="1">Cytoplasm</location>
    </subcellularLocation>
</comment>
<comment type="similarity">
    <text evidence="1">Belongs to the HisA/HisF family.</text>
</comment>
<keyword id="KW-0028">Amino-acid biosynthesis</keyword>
<keyword id="KW-0963">Cytoplasm</keyword>
<keyword id="KW-0368">Histidine biosynthesis</keyword>
<keyword id="KW-0413">Isomerase</keyword>
<keyword id="KW-1185">Reference proteome</keyword>
<name>HIS4_ALIB4</name>
<reference key="1">
    <citation type="journal article" date="2007" name="PLoS ONE">
        <title>The complete genome sequence and analysis of the Epsilonproteobacterium Arcobacter butzleri.</title>
        <authorList>
            <person name="Miller W.G."/>
            <person name="Parker C.T."/>
            <person name="Rubenfield M."/>
            <person name="Mendz G.L."/>
            <person name="Woesten M.M.S.M."/>
            <person name="Ussery D.W."/>
            <person name="Stolz J.F."/>
            <person name="Binnewies T.T."/>
            <person name="Hallin P.F."/>
            <person name="Wang G."/>
            <person name="Malek J.A."/>
            <person name="Rogosin A."/>
            <person name="Stanker L.H."/>
            <person name="Mandrell R.E."/>
        </authorList>
    </citation>
    <scope>NUCLEOTIDE SEQUENCE [LARGE SCALE GENOMIC DNA]</scope>
    <source>
        <strain>RM4018</strain>
    </source>
</reference>
<protein>
    <recommendedName>
        <fullName evidence="1">1-(5-phosphoribosyl)-5-[(5-phosphoribosylamino)methylideneamino] imidazole-4-carboxamide isomerase</fullName>
        <ecNumber evidence="1">5.3.1.16</ecNumber>
    </recommendedName>
    <alternativeName>
        <fullName evidence="1">Phosphoribosylformimino-5-aminoimidazole carboxamide ribotide isomerase</fullName>
    </alternativeName>
</protein>
<evidence type="ECO:0000255" key="1">
    <source>
        <dbReference type="HAMAP-Rule" id="MF_01014"/>
    </source>
</evidence>
<feature type="chain" id="PRO_1000063183" description="1-(5-phosphoribosyl)-5-[(5-phosphoribosylamino)methylideneamino] imidazole-4-carboxamide isomerase">
    <location>
        <begin position="1"/>
        <end position="235"/>
    </location>
</feature>
<feature type="active site" description="Proton acceptor" evidence="1">
    <location>
        <position position="8"/>
    </location>
</feature>
<feature type="active site" description="Proton donor" evidence="1">
    <location>
        <position position="127"/>
    </location>
</feature>
<sequence length="235" mass="25327">MDILPAIDLKDGKAVRLSKGLMDSAKIYSDEPWQVALRFEELGSKWVHIVDLNGAFAGKPANLEQIKKIRENCNLKIELGGGIRDEETIKMYLELGVDRLILGSIAVKDPIFVKKMASKYPIAVGIDAMNGMVAVEGWAEVSTMKATDLAREFANAGVQAIICTDISKDGMLCGVNVEFTESIALASSVDTIASGGVKDIQDIINCKANGNISGVIVGKAFYEGTLDLEEAFKIL</sequence>
<gene>
    <name evidence="1" type="primary">hisA</name>
    <name type="ordered locus">Abu_0473</name>
</gene>
<proteinExistence type="inferred from homology"/>
<dbReference type="EC" id="5.3.1.16" evidence="1"/>
<dbReference type="EMBL" id="CP000361">
    <property type="protein sequence ID" value="ABV66748.1"/>
    <property type="molecule type" value="Genomic_DNA"/>
</dbReference>
<dbReference type="RefSeq" id="WP_004510542.1">
    <property type="nucleotide sequence ID" value="NC_009850.1"/>
</dbReference>
<dbReference type="SMR" id="A8ES24"/>
<dbReference type="STRING" id="367737.Abu_0473"/>
<dbReference type="GeneID" id="24303903"/>
<dbReference type="KEGG" id="abu:Abu_0473"/>
<dbReference type="eggNOG" id="COG0106">
    <property type="taxonomic scope" value="Bacteria"/>
</dbReference>
<dbReference type="HOGENOM" id="CLU_048577_1_2_7"/>
<dbReference type="UniPathway" id="UPA00031">
    <property type="reaction ID" value="UER00009"/>
</dbReference>
<dbReference type="Proteomes" id="UP000001136">
    <property type="component" value="Chromosome"/>
</dbReference>
<dbReference type="GO" id="GO:0005737">
    <property type="term" value="C:cytoplasm"/>
    <property type="evidence" value="ECO:0007669"/>
    <property type="project" value="UniProtKB-SubCell"/>
</dbReference>
<dbReference type="GO" id="GO:0003949">
    <property type="term" value="F:1-(5-phosphoribosyl)-5-[(5-phosphoribosylamino)methylideneamino]imidazole-4-carboxamide isomerase activity"/>
    <property type="evidence" value="ECO:0007669"/>
    <property type="project" value="UniProtKB-UniRule"/>
</dbReference>
<dbReference type="GO" id="GO:0000105">
    <property type="term" value="P:L-histidine biosynthetic process"/>
    <property type="evidence" value="ECO:0007669"/>
    <property type="project" value="UniProtKB-UniRule"/>
</dbReference>
<dbReference type="GO" id="GO:0000162">
    <property type="term" value="P:L-tryptophan biosynthetic process"/>
    <property type="evidence" value="ECO:0007669"/>
    <property type="project" value="TreeGrafter"/>
</dbReference>
<dbReference type="CDD" id="cd04732">
    <property type="entry name" value="HisA"/>
    <property type="match status" value="1"/>
</dbReference>
<dbReference type="FunFam" id="3.20.20.70:FF:000009">
    <property type="entry name" value="1-(5-phosphoribosyl)-5-[(5-phosphoribosylamino)methylideneamino] imidazole-4-carboxamide isomerase"/>
    <property type="match status" value="1"/>
</dbReference>
<dbReference type="Gene3D" id="3.20.20.70">
    <property type="entry name" value="Aldolase class I"/>
    <property type="match status" value="1"/>
</dbReference>
<dbReference type="HAMAP" id="MF_01014">
    <property type="entry name" value="HisA"/>
    <property type="match status" value="1"/>
</dbReference>
<dbReference type="InterPro" id="IPR013785">
    <property type="entry name" value="Aldolase_TIM"/>
</dbReference>
<dbReference type="InterPro" id="IPR006062">
    <property type="entry name" value="His_biosynth"/>
</dbReference>
<dbReference type="InterPro" id="IPR006063">
    <property type="entry name" value="HisA_bact_arch"/>
</dbReference>
<dbReference type="InterPro" id="IPR044524">
    <property type="entry name" value="Isoase_HisA-like"/>
</dbReference>
<dbReference type="InterPro" id="IPR023016">
    <property type="entry name" value="Isoase_HisA-like_bact"/>
</dbReference>
<dbReference type="InterPro" id="IPR011060">
    <property type="entry name" value="RibuloseP-bd_barrel"/>
</dbReference>
<dbReference type="NCBIfam" id="TIGR00007">
    <property type="entry name" value="1-(5-phosphoribosyl)-5-[(5-phosphoribosylamino)methylideneamino]imidazole-4-carboxamide isomerase"/>
    <property type="match status" value="1"/>
</dbReference>
<dbReference type="PANTHER" id="PTHR43090">
    <property type="entry name" value="1-(5-PHOSPHORIBOSYL)-5-[(5-PHOSPHORIBOSYLAMINO)METHYLIDENEAMINO] IMIDAZOLE-4-CARBOXAMIDE ISOMERASE"/>
    <property type="match status" value="1"/>
</dbReference>
<dbReference type="PANTHER" id="PTHR43090:SF2">
    <property type="entry name" value="1-(5-PHOSPHORIBOSYL)-5-[(5-PHOSPHORIBOSYLAMINO)METHYLIDENEAMINO] IMIDAZOLE-4-CARBOXAMIDE ISOMERASE"/>
    <property type="match status" value="1"/>
</dbReference>
<dbReference type="Pfam" id="PF00977">
    <property type="entry name" value="His_biosynth"/>
    <property type="match status" value="1"/>
</dbReference>
<dbReference type="SUPFAM" id="SSF51366">
    <property type="entry name" value="Ribulose-phoshate binding barrel"/>
    <property type="match status" value="1"/>
</dbReference>